<sequence>MVDKSQETTHFGFQTVAKEQKADMVAHVFHSVASKYDVMNDLMSFGIHRLWKRFTIDCSGVRRGQTVLDLAGGTGDLTAKFSRLVGETGKVVLADINESMLKMGREKLRNIGVIGNVEYVQANAEALPFPDNTFDCITISFGLRNVTDKDKALRSMYRVLKPGGRLLVLEFSKPIIEPLSKAYDAYSFHVLPRIGSLVANDADSYRYLAESIRMHPDQDTLKAMMQDAGFESVDYYNLTAGVVALHRGYKF</sequence>
<comment type="function">
    <text evidence="1">Methyltransferase required for the conversion of demethylmenaquinol (DMKH2) to menaquinol (MKH2) and the conversion of 2-polyprenyl-6-methoxy-1,4-benzoquinol (DDMQH2) to 2-polyprenyl-3-methyl-6-methoxy-1,4-benzoquinol (DMQH2).</text>
</comment>
<comment type="catalytic activity">
    <reaction evidence="1">
        <text>a 2-demethylmenaquinol + S-adenosyl-L-methionine = a menaquinol + S-adenosyl-L-homocysteine + H(+)</text>
        <dbReference type="Rhea" id="RHEA:42640"/>
        <dbReference type="Rhea" id="RHEA-COMP:9539"/>
        <dbReference type="Rhea" id="RHEA-COMP:9563"/>
        <dbReference type="ChEBI" id="CHEBI:15378"/>
        <dbReference type="ChEBI" id="CHEBI:18151"/>
        <dbReference type="ChEBI" id="CHEBI:55437"/>
        <dbReference type="ChEBI" id="CHEBI:57856"/>
        <dbReference type="ChEBI" id="CHEBI:59789"/>
        <dbReference type="EC" id="2.1.1.163"/>
    </reaction>
</comment>
<comment type="catalytic activity">
    <reaction evidence="1">
        <text>a 2-methoxy-6-(all-trans-polyprenyl)benzene-1,4-diol + S-adenosyl-L-methionine = a 5-methoxy-2-methyl-3-(all-trans-polyprenyl)benzene-1,4-diol + S-adenosyl-L-homocysteine + H(+)</text>
        <dbReference type="Rhea" id="RHEA:28286"/>
        <dbReference type="Rhea" id="RHEA-COMP:10858"/>
        <dbReference type="Rhea" id="RHEA-COMP:10859"/>
        <dbReference type="ChEBI" id="CHEBI:15378"/>
        <dbReference type="ChEBI" id="CHEBI:57856"/>
        <dbReference type="ChEBI" id="CHEBI:59789"/>
        <dbReference type="ChEBI" id="CHEBI:84166"/>
        <dbReference type="ChEBI" id="CHEBI:84167"/>
        <dbReference type="EC" id="2.1.1.201"/>
    </reaction>
</comment>
<comment type="pathway">
    <text evidence="1">Quinol/quinone metabolism; menaquinone biosynthesis; menaquinol from 1,4-dihydroxy-2-naphthoate: step 2/2.</text>
</comment>
<comment type="pathway">
    <text evidence="1">Cofactor biosynthesis; ubiquinone biosynthesis.</text>
</comment>
<comment type="similarity">
    <text evidence="1">Belongs to the class I-like SAM-binding methyltransferase superfamily. MenG/UbiE family.</text>
</comment>
<feature type="chain" id="PRO_1000070198" description="Ubiquinone/menaquinone biosynthesis C-methyltransferase UbiE">
    <location>
        <begin position="1"/>
        <end position="251"/>
    </location>
</feature>
<feature type="binding site" evidence="1">
    <location>
        <position position="74"/>
    </location>
    <ligand>
        <name>S-adenosyl-L-methionine</name>
        <dbReference type="ChEBI" id="CHEBI:59789"/>
    </ligand>
</feature>
<feature type="binding site" evidence="1">
    <location>
        <position position="95"/>
    </location>
    <ligand>
        <name>S-adenosyl-L-methionine</name>
        <dbReference type="ChEBI" id="CHEBI:59789"/>
    </ligand>
</feature>
<feature type="binding site" evidence="1">
    <location>
        <begin position="123"/>
        <end position="124"/>
    </location>
    <ligand>
        <name>S-adenosyl-L-methionine</name>
        <dbReference type="ChEBI" id="CHEBI:59789"/>
    </ligand>
</feature>
<feature type="binding site" evidence="1">
    <location>
        <position position="140"/>
    </location>
    <ligand>
        <name>S-adenosyl-L-methionine</name>
        <dbReference type="ChEBI" id="CHEBI:59789"/>
    </ligand>
</feature>
<protein>
    <recommendedName>
        <fullName evidence="1">Ubiquinone/menaquinone biosynthesis C-methyltransferase UbiE</fullName>
        <ecNumber evidence="1">2.1.1.163</ecNumber>
        <ecNumber evidence="1">2.1.1.201</ecNumber>
    </recommendedName>
    <alternativeName>
        <fullName evidence="1">2-methoxy-6-polyprenyl-1,4-benzoquinol methylase</fullName>
    </alternativeName>
    <alternativeName>
        <fullName evidence="1">Demethylmenaquinone methyltransferase</fullName>
    </alternativeName>
</protein>
<name>UBIE_ECOHS</name>
<reference key="1">
    <citation type="journal article" date="2008" name="J. Bacteriol.">
        <title>The pangenome structure of Escherichia coli: comparative genomic analysis of E. coli commensal and pathogenic isolates.</title>
        <authorList>
            <person name="Rasko D.A."/>
            <person name="Rosovitz M.J."/>
            <person name="Myers G.S.A."/>
            <person name="Mongodin E.F."/>
            <person name="Fricke W.F."/>
            <person name="Gajer P."/>
            <person name="Crabtree J."/>
            <person name="Sebaihia M."/>
            <person name="Thomson N.R."/>
            <person name="Chaudhuri R."/>
            <person name="Henderson I.R."/>
            <person name="Sperandio V."/>
            <person name="Ravel J."/>
        </authorList>
    </citation>
    <scope>NUCLEOTIDE SEQUENCE [LARGE SCALE GENOMIC DNA]</scope>
    <source>
        <strain>HS</strain>
    </source>
</reference>
<dbReference type="EC" id="2.1.1.163" evidence="1"/>
<dbReference type="EC" id="2.1.1.201" evidence="1"/>
<dbReference type="EMBL" id="CP000802">
    <property type="protein sequence ID" value="ABV08244.1"/>
    <property type="molecule type" value="Genomic_DNA"/>
</dbReference>
<dbReference type="RefSeq" id="WP_000227958.1">
    <property type="nucleotide sequence ID" value="NC_009800.1"/>
</dbReference>
<dbReference type="SMR" id="A8A6U0"/>
<dbReference type="GeneID" id="93778102"/>
<dbReference type="KEGG" id="ecx:EcHS_A4057"/>
<dbReference type="HOGENOM" id="CLU_037990_0_0_6"/>
<dbReference type="UniPathway" id="UPA00079">
    <property type="reaction ID" value="UER00169"/>
</dbReference>
<dbReference type="UniPathway" id="UPA00232"/>
<dbReference type="GO" id="GO:0008425">
    <property type="term" value="F:2-methoxy-6-polyprenyl-1,4-benzoquinol methyltransferase activity"/>
    <property type="evidence" value="ECO:0007669"/>
    <property type="project" value="UniProtKB-UniRule"/>
</dbReference>
<dbReference type="GO" id="GO:0043770">
    <property type="term" value="F:demethylmenaquinone methyltransferase activity"/>
    <property type="evidence" value="ECO:0007669"/>
    <property type="project" value="UniProtKB-UniRule"/>
</dbReference>
<dbReference type="GO" id="GO:0009060">
    <property type="term" value="P:aerobic respiration"/>
    <property type="evidence" value="ECO:0007669"/>
    <property type="project" value="UniProtKB-UniRule"/>
</dbReference>
<dbReference type="GO" id="GO:0009234">
    <property type="term" value="P:menaquinone biosynthetic process"/>
    <property type="evidence" value="ECO:0007669"/>
    <property type="project" value="UniProtKB-UniRule"/>
</dbReference>
<dbReference type="GO" id="GO:0032259">
    <property type="term" value="P:methylation"/>
    <property type="evidence" value="ECO:0007669"/>
    <property type="project" value="UniProtKB-KW"/>
</dbReference>
<dbReference type="CDD" id="cd02440">
    <property type="entry name" value="AdoMet_MTases"/>
    <property type="match status" value="1"/>
</dbReference>
<dbReference type="FunFam" id="3.40.50.150:FF:000014">
    <property type="entry name" value="Ubiquinone/menaquinone biosynthesis C-methyltransferase UbiE"/>
    <property type="match status" value="1"/>
</dbReference>
<dbReference type="Gene3D" id="3.40.50.150">
    <property type="entry name" value="Vaccinia Virus protein VP39"/>
    <property type="match status" value="1"/>
</dbReference>
<dbReference type="HAMAP" id="MF_01813">
    <property type="entry name" value="MenG_UbiE_methyltr"/>
    <property type="match status" value="1"/>
</dbReference>
<dbReference type="InterPro" id="IPR029063">
    <property type="entry name" value="SAM-dependent_MTases_sf"/>
</dbReference>
<dbReference type="InterPro" id="IPR004033">
    <property type="entry name" value="UbiE/COQ5_MeTrFase"/>
</dbReference>
<dbReference type="InterPro" id="IPR023576">
    <property type="entry name" value="UbiE/COQ5_MeTrFase_CS"/>
</dbReference>
<dbReference type="NCBIfam" id="TIGR01934">
    <property type="entry name" value="MenG_MenH_UbiE"/>
    <property type="match status" value="1"/>
</dbReference>
<dbReference type="NCBIfam" id="NF001240">
    <property type="entry name" value="PRK00216.1-1"/>
    <property type="match status" value="1"/>
</dbReference>
<dbReference type="NCBIfam" id="NF001242">
    <property type="entry name" value="PRK00216.1-3"/>
    <property type="match status" value="1"/>
</dbReference>
<dbReference type="NCBIfam" id="NF001244">
    <property type="entry name" value="PRK00216.1-5"/>
    <property type="match status" value="1"/>
</dbReference>
<dbReference type="PANTHER" id="PTHR43591:SF24">
    <property type="entry name" value="2-METHOXY-6-POLYPRENYL-1,4-BENZOQUINOL METHYLASE, MITOCHONDRIAL"/>
    <property type="match status" value="1"/>
</dbReference>
<dbReference type="PANTHER" id="PTHR43591">
    <property type="entry name" value="METHYLTRANSFERASE"/>
    <property type="match status" value="1"/>
</dbReference>
<dbReference type="Pfam" id="PF01209">
    <property type="entry name" value="Ubie_methyltran"/>
    <property type="match status" value="1"/>
</dbReference>
<dbReference type="SUPFAM" id="SSF53335">
    <property type="entry name" value="S-adenosyl-L-methionine-dependent methyltransferases"/>
    <property type="match status" value="1"/>
</dbReference>
<dbReference type="PROSITE" id="PS51608">
    <property type="entry name" value="SAM_MT_UBIE"/>
    <property type="match status" value="1"/>
</dbReference>
<dbReference type="PROSITE" id="PS01183">
    <property type="entry name" value="UBIE_1"/>
    <property type="match status" value="1"/>
</dbReference>
<dbReference type="PROSITE" id="PS01184">
    <property type="entry name" value="UBIE_2"/>
    <property type="match status" value="1"/>
</dbReference>
<proteinExistence type="inferred from homology"/>
<evidence type="ECO:0000255" key="1">
    <source>
        <dbReference type="HAMAP-Rule" id="MF_01813"/>
    </source>
</evidence>
<keyword id="KW-0474">Menaquinone biosynthesis</keyword>
<keyword id="KW-0489">Methyltransferase</keyword>
<keyword id="KW-0949">S-adenosyl-L-methionine</keyword>
<keyword id="KW-0808">Transferase</keyword>
<keyword id="KW-0831">Ubiquinone biosynthesis</keyword>
<accession>A8A6U0</accession>
<organism>
    <name type="scientific">Escherichia coli O9:H4 (strain HS)</name>
    <dbReference type="NCBI Taxonomy" id="331112"/>
    <lineage>
        <taxon>Bacteria</taxon>
        <taxon>Pseudomonadati</taxon>
        <taxon>Pseudomonadota</taxon>
        <taxon>Gammaproteobacteria</taxon>
        <taxon>Enterobacterales</taxon>
        <taxon>Enterobacteriaceae</taxon>
        <taxon>Escherichia</taxon>
    </lineage>
</organism>
<gene>
    <name evidence="1" type="primary">ubiE</name>
    <name type="ordered locus">EcHS_A4057</name>
</gene>